<comment type="similarity">
    <text evidence="1">Belongs to the SfsA family.</text>
</comment>
<organism>
    <name type="scientific">Synechococcus sp. (strain CC9311)</name>
    <dbReference type="NCBI Taxonomy" id="64471"/>
    <lineage>
        <taxon>Bacteria</taxon>
        <taxon>Bacillati</taxon>
        <taxon>Cyanobacteriota</taxon>
        <taxon>Cyanophyceae</taxon>
        <taxon>Synechococcales</taxon>
        <taxon>Synechococcaceae</taxon>
        <taxon>Synechococcus</taxon>
    </lineage>
</organism>
<evidence type="ECO:0000255" key="1">
    <source>
        <dbReference type="HAMAP-Rule" id="MF_00095"/>
    </source>
</evidence>
<protein>
    <recommendedName>
        <fullName evidence="1">Sugar fermentation stimulation protein homolog</fullName>
    </recommendedName>
</protein>
<keyword id="KW-1185">Reference proteome</keyword>
<gene>
    <name evidence="1" type="primary">sfsA</name>
    <name type="ordered locus">sync_0294</name>
</gene>
<dbReference type="EMBL" id="CP000435">
    <property type="protein sequence ID" value="ABI45699.1"/>
    <property type="molecule type" value="Genomic_DNA"/>
</dbReference>
<dbReference type="RefSeq" id="WP_011618274.1">
    <property type="nucleotide sequence ID" value="NC_008319.1"/>
</dbReference>
<dbReference type="SMR" id="Q0IDE3"/>
<dbReference type="STRING" id="64471.sync_0294"/>
<dbReference type="KEGG" id="syg:sync_0294"/>
<dbReference type="eggNOG" id="COG1489">
    <property type="taxonomic scope" value="Bacteria"/>
</dbReference>
<dbReference type="HOGENOM" id="CLU_052299_2_0_3"/>
<dbReference type="OrthoDB" id="9802365at2"/>
<dbReference type="Proteomes" id="UP000001961">
    <property type="component" value="Chromosome"/>
</dbReference>
<dbReference type="GO" id="GO:0003677">
    <property type="term" value="F:DNA binding"/>
    <property type="evidence" value="ECO:0007669"/>
    <property type="project" value="InterPro"/>
</dbReference>
<dbReference type="CDD" id="cd22359">
    <property type="entry name" value="SfsA-like_bacterial"/>
    <property type="match status" value="1"/>
</dbReference>
<dbReference type="Gene3D" id="2.40.50.580">
    <property type="match status" value="1"/>
</dbReference>
<dbReference type="Gene3D" id="3.40.1350.60">
    <property type="match status" value="1"/>
</dbReference>
<dbReference type="HAMAP" id="MF_00095">
    <property type="entry name" value="SfsA"/>
    <property type="match status" value="1"/>
</dbReference>
<dbReference type="InterPro" id="IPR005224">
    <property type="entry name" value="SfsA"/>
</dbReference>
<dbReference type="InterPro" id="IPR040452">
    <property type="entry name" value="SfsA_C"/>
</dbReference>
<dbReference type="InterPro" id="IPR041465">
    <property type="entry name" value="SfsA_N"/>
</dbReference>
<dbReference type="NCBIfam" id="TIGR00230">
    <property type="entry name" value="sfsA"/>
    <property type="match status" value="1"/>
</dbReference>
<dbReference type="PANTHER" id="PTHR30545">
    <property type="entry name" value="SUGAR FERMENTATION STIMULATION PROTEIN A"/>
    <property type="match status" value="1"/>
</dbReference>
<dbReference type="PANTHER" id="PTHR30545:SF2">
    <property type="entry name" value="SUGAR FERMENTATION STIMULATION PROTEIN A"/>
    <property type="match status" value="1"/>
</dbReference>
<dbReference type="Pfam" id="PF03749">
    <property type="entry name" value="SfsA"/>
    <property type="match status" value="1"/>
</dbReference>
<dbReference type="Pfam" id="PF17746">
    <property type="entry name" value="SfsA_N"/>
    <property type="match status" value="1"/>
</dbReference>
<name>SFSA_SYNS3</name>
<accession>Q0IDE3</accession>
<proteinExistence type="inferred from homology"/>
<sequence>MTGTSILQFPVLSEGVLLKRYKRFLADVELKDGQVVTVHCANTGPMKGVLHPGGRVRVRHAPSPKRKLAWTWEQAEIPSSDGTLCWAGINTALPNKLIRALIEAGGLKDQLGPIKTIRAEVPYGLNRRSRIDLLLTPDDSADDQRPIYVEVKNTTWSHGDVALFPDTVTERGQKHLEELTALLPDARGVLVPCLSRPDVIAFAPGDSADPRYGDLFRQAMAAGVEVLPCCFSFYEDQIQWEGVRTVCPRL</sequence>
<feature type="chain" id="PRO_1000008039" description="Sugar fermentation stimulation protein homolog">
    <location>
        <begin position="1"/>
        <end position="250"/>
    </location>
</feature>
<reference key="1">
    <citation type="journal article" date="2006" name="Proc. Natl. Acad. Sci. U.S.A.">
        <title>Genome sequence of Synechococcus CC9311: insights into adaptation to a coastal environment.</title>
        <authorList>
            <person name="Palenik B."/>
            <person name="Ren Q."/>
            <person name="Dupont C.L."/>
            <person name="Myers G.S."/>
            <person name="Heidelberg J.F."/>
            <person name="Badger J.H."/>
            <person name="Madupu R."/>
            <person name="Nelson W.C."/>
            <person name="Brinkac L.M."/>
            <person name="Dodson R.J."/>
            <person name="Durkin A.S."/>
            <person name="Daugherty S.C."/>
            <person name="Sullivan S.A."/>
            <person name="Khouri H."/>
            <person name="Mohamoud Y."/>
            <person name="Halpin R."/>
            <person name="Paulsen I.T."/>
        </authorList>
    </citation>
    <scope>NUCLEOTIDE SEQUENCE [LARGE SCALE GENOMIC DNA]</scope>
    <source>
        <strain>CC9311</strain>
    </source>
</reference>